<feature type="initiator methionine" description="Removed" evidence="20">
    <location>
        <position position="1"/>
    </location>
</feature>
<feature type="chain" id="PRO_0000090574" description="ADP/ATP translocase 1">
    <location>
        <begin position="2"/>
        <end position="298"/>
    </location>
</feature>
<feature type="topological domain" description="Mitochondrial intermembrane" evidence="24">
    <location>
        <begin position="1"/>
        <end position="7"/>
    </location>
</feature>
<feature type="transmembrane region" description="Helical; Name=1" evidence="2">
    <location>
        <begin position="8"/>
        <end position="37"/>
    </location>
</feature>
<feature type="topological domain" description="Mitochondrial matrix" evidence="24">
    <location>
        <begin position="38"/>
        <end position="74"/>
    </location>
</feature>
<feature type="transmembrane region" description="Helical; Name=2" evidence="2">
    <location>
        <begin position="75"/>
        <end position="99"/>
    </location>
</feature>
<feature type="topological domain" description="Mitochondrial intermembrane" evidence="24">
    <location>
        <begin position="100"/>
        <end position="109"/>
    </location>
</feature>
<feature type="transmembrane region" description="Helical; Name=3" evidence="2">
    <location>
        <begin position="110"/>
        <end position="130"/>
    </location>
</feature>
<feature type="topological domain" description="Mitochondrial matrix" evidence="24">
    <location>
        <begin position="131"/>
        <end position="178"/>
    </location>
</feature>
<feature type="transmembrane region" description="Helical; Name=4" evidence="2">
    <location>
        <begin position="179"/>
        <end position="199"/>
    </location>
</feature>
<feature type="topological domain" description="Mitochondrial intermembrane" evidence="24">
    <location>
        <begin position="200"/>
        <end position="210"/>
    </location>
</feature>
<feature type="transmembrane region" description="Helical; Name=5" evidence="2">
    <location>
        <begin position="211"/>
        <end position="231"/>
    </location>
</feature>
<feature type="topological domain" description="Mitochondrial matrix" evidence="24">
    <location>
        <begin position="232"/>
        <end position="273"/>
    </location>
</feature>
<feature type="transmembrane region" description="Helical; Name=6" evidence="2">
    <location>
        <begin position="274"/>
        <end position="291"/>
    </location>
</feature>
<feature type="topological domain" description="Mitochondrial intermembrane" evidence="24">
    <location>
        <begin position="292"/>
        <end position="298"/>
    </location>
</feature>
<feature type="repeat" description="Solcar 1">
    <location>
        <begin position="6"/>
        <end position="98"/>
    </location>
</feature>
<feature type="repeat" description="Solcar 2">
    <location>
        <begin position="111"/>
        <end position="201"/>
    </location>
</feature>
<feature type="repeat" description="Solcar 3">
    <location>
        <begin position="212"/>
        <end position="297"/>
    </location>
</feature>
<feature type="region of interest" description="Important for transport activity" evidence="18">
    <location>
        <begin position="235"/>
        <end position="240"/>
    </location>
</feature>
<feature type="short sequence motif" description="Nucleotide carrier signature motif" evidence="2">
    <location>
        <begin position="235"/>
        <end position="240"/>
    </location>
</feature>
<feature type="binding site" evidence="2">
    <location>
        <position position="80"/>
    </location>
    <ligand>
        <name>ADP</name>
        <dbReference type="ChEBI" id="CHEBI:456216"/>
    </ligand>
</feature>
<feature type="binding site" evidence="2">
    <location>
        <position position="92"/>
    </location>
    <ligand>
        <name>ADP</name>
        <dbReference type="ChEBI" id="CHEBI:456216"/>
    </ligand>
</feature>
<feature type="binding site" evidence="2">
    <location>
        <position position="235"/>
    </location>
    <ligand>
        <name>ADP</name>
        <dbReference type="ChEBI" id="CHEBI:456216"/>
    </ligand>
</feature>
<feature type="modified residue" description="N-acetylglycine" evidence="20">
    <location>
        <position position="2"/>
    </location>
</feature>
<feature type="modified residue" description="Phosphoserine" evidence="4">
    <location>
        <position position="7"/>
    </location>
</feature>
<feature type="modified residue" description="N6,N6,N6-trimethyllysine" evidence="4">
    <location>
        <position position="52"/>
    </location>
</feature>
<feature type="modified residue" description="N6-succinyllysine" evidence="3">
    <location>
        <position position="147"/>
    </location>
</feature>
<feature type="modified residue" description="S-nitrosocysteine" evidence="4">
    <location>
        <position position="160"/>
    </location>
</feature>
<feature type="modified residue" description="N6-succinyllysine" evidence="3">
    <location>
        <position position="245"/>
    </location>
</feature>
<feature type="modified residue" description="N6-succinyllysine" evidence="3">
    <location>
        <position position="272"/>
    </location>
</feature>
<feature type="sequence variant" id="VAR_078071" description="In MTDPS12A; decreased function in ADP transport; dbSNP:rs886041081." evidence="18">
    <original>R</original>
    <variation>H</variation>
    <location>
        <position position="80"/>
    </location>
</feature>
<feature type="sequence variant" id="VAR_038814" description="In PEOA2; decreased function in ADP transport." evidence="10 18">
    <original>A</original>
    <variation>D</variation>
    <location>
        <position position="90"/>
    </location>
</feature>
<feature type="sequence variant" id="VAR_022459" description="In PEOA2; decreased function in ADP transport; dbSNP:rs104893876." evidence="7 13 18">
    <original>L</original>
    <variation>P</variation>
    <location>
        <position position="98"/>
    </location>
</feature>
<feature type="sequence variant" id="VAR_022460" description="In PEOA2; decreased function in ADP transport; dbSNP:rs28999114." evidence="8 18">
    <original>D</original>
    <variation>G</variation>
    <location>
        <position position="104"/>
    </location>
</feature>
<feature type="sequence variant" id="VAR_012111" description="In PEOA2; decreased function in ADP transport; inverted direction of ADP:ATP transport, with ATP entering the mitochondrial matrix; dbSNP:rs104893873." evidence="6 13 14 18">
    <original>A</original>
    <variation>P</variation>
    <location>
        <position position="114"/>
    </location>
</feature>
<feature type="sequence variant" id="VAR_038815" description="In MTDPS12B; loss of function in ADP transport; dbSNP:rs121912683." evidence="12 18">
    <original>A</original>
    <variation>D</variation>
    <location>
        <position position="123"/>
    </location>
</feature>
<feature type="sequence variant" id="VAR_078072" description="In MTDPS12A; severely decreased function in ADP transport; dbSNP:rs886041082." evidence="18">
    <original>R</original>
    <variation>G</variation>
    <location>
        <position position="235"/>
    </location>
</feature>
<feature type="sequence variant" id="VAR_078073" description="In MTDPS12B; loss of function in ADP transport; dbSNP:rs770816416." evidence="16 18">
    <original>R</original>
    <variation>P</variation>
    <location>
        <position position="236"/>
    </location>
</feature>
<feature type="sequence variant" id="VAR_012112" description="In PEOA2; inverted direction of ADP:ATP transport, with ATP entering the mitochondrial matrix; dbSNP:rs104893874." evidence="6 9 14">
    <original>V</original>
    <variation>M</variation>
    <location>
        <position position="289"/>
    </location>
</feature>
<feature type="sequence conflict" description="In Ref. 1; AAA61223." evidence="24" ref="1">
    <original>G</original>
    <variation>A</variation>
    <location>
        <position position="16"/>
    </location>
</feature>
<feature type="sequence conflict" description="In Ref. 1; AAA61223." evidence="24" ref="1">
    <original>KGA</original>
    <variation>RR</variation>
    <location>
        <begin position="147"/>
        <end position="149"/>
    </location>
</feature>
<feature type="sequence conflict" description="In Ref. 1; AAA61223." evidence="24" ref="1">
    <original>V</original>
    <variation>L</variation>
    <location>
        <position position="227"/>
    </location>
</feature>
<accession>P12235</accession>
<accession>D3DP59</accession>
<protein>
    <recommendedName>
        <fullName evidence="24">ADP/ATP translocase 1</fullName>
    </recommendedName>
    <alternativeName>
        <fullName evidence="3">ADP,ATP carrier protein 1</fullName>
    </alternativeName>
    <alternativeName>
        <fullName evidence="21">ADP,ATP carrier protein, heart/skeletal muscle isoform T1</fullName>
    </alternativeName>
    <alternativeName>
        <fullName evidence="23">Adenine nucleotide translocator 1</fullName>
        <shortName evidence="23">ANT 1</shortName>
    </alternativeName>
    <alternativeName>
        <fullName evidence="24">Solute carrier family 25 member 4</fullName>
    </alternativeName>
</protein>
<proteinExistence type="evidence at protein level"/>
<sequence length="298" mass="33064">MGDHAWSFLKDFLAGGVAAAVSKTAVAPIERVKLLLQVQHASKQISAEKQYKGIIDCVVRIPKEQGFLSFWRGNLANVIRYFPTQALNFAFKDKYKQLFLGGVDRHKQFWRYFAGNLASGGAAGATSLCFVYPLDFARTRLAADVGKGAAQREFHGLGDCIIKIFKSDGLRGLYQGFNVSVQGIIIYRAAYFGVYDTAKGMLPDPKNVHIFVSWMIAQSVTAVAGLVSYPFDTVRRRMMMQSGRKGADIMYTGTVDCWRKIAKDEGAKAFFKGAWSNVLRGMGGAFVLVLYDEIKKYV</sequence>
<reference key="1">
    <citation type="journal article" date="1987" name="Proc. Natl. Acad. Sci. U.S.A.">
        <title>cDNA sequence of a human skeletal muscle ADP/ATP translocator: lack of a leader peptide, divergence from a fibroblast translocator cDNA, and coevolution with mitochondrial DNA genes.</title>
        <authorList>
            <person name="Neckelmann N."/>
            <person name="Li K."/>
            <person name="Wade R.P."/>
            <person name="Shuster R."/>
            <person name="Wallace D.C."/>
        </authorList>
    </citation>
    <scope>NUCLEOTIDE SEQUENCE [MRNA]</scope>
</reference>
<reference key="2">
    <citation type="journal article" date="1989" name="J. Mol. Biol.">
        <title>DNA sequences of two expressed nuclear genes for human mitochondrial ADP/ATP translocase.</title>
        <authorList>
            <person name="Cozens A.L."/>
            <person name="Runswick M.J."/>
            <person name="Walker J.E."/>
        </authorList>
    </citation>
    <scope>NUCLEOTIDE SEQUENCE [MRNA]</scope>
</reference>
<reference key="3">
    <citation type="journal article" date="1989" name="J. Biol. Chem.">
        <title>A human muscle adenine nucleotide translocator gene has four exons, is located on chromosome 4, and is differentially expressed.</title>
        <authorList>
            <person name="Li K."/>
            <person name="Warner C.K."/>
            <person name="Hodge J.A."/>
            <person name="Minoshima S."/>
            <person name="Kudoh J."/>
            <person name="Fukuyama R."/>
            <person name="Maekawa M."/>
            <person name="Shimizu Y."/>
            <person name="Shimizu N."/>
            <person name="Wallace D.C."/>
        </authorList>
    </citation>
    <scope>NUCLEOTIDE SEQUENCE [GENOMIC DNA]</scope>
</reference>
<reference key="4">
    <citation type="journal article" date="2011" name="Nucleic Acids Res.">
        <title>Identification of rare DNA variants in mitochondrial disorders with improved array-based sequencing.</title>
        <authorList>
            <person name="Wang W."/>
            <person name="Shen P."/>
            <person name="Thiyagarajan S."/>
            <person name="Lin S."/>
            <person name="Palm C."/>
            <person name="Horvath R."/>
            <person name="Klopstock T."/>
            <person name="Cutler D."/>
            <person name="Pique L."/>
            <person name="Schrijver I."/>
            <person name="Davis R.W."/>
            <person name="Mindrinos M."/>
            <person name="Speed T.P."/>
            <person name="Scharfe C."/>
        </authorList>
    </citation>
    <scope>NUCLEOTIDE SEQUENCE [GENOMIC DNA]</scope>
</reference>
<reference key="5">
    <citation type="submission" date="2005-09" db="EMBL/GenBank/DDBJ databases">
        <authorList>
            <person name="Mural R.J."/>
            <person name="Istrail S."/>
            <person name="Sutton G.G."/>
            <person name="Florea L."/>
            <person name="Halpern A.L."/>
            <person name="Mobarry C.M."/>
            <person name="Lippert R."/>
            <person name="Walenz B."/>
            <person name="Shatkay H."/>
            <person name="Dew I."/>
            <person name="Miller J.R."/>
            <person name="Flanigan M.J."/>
            <person name="Edwards N.J."/>
            <person name="Bolanos R."/>
            <person name="Fasulo D."/>
            <person name="Halldorsson B.V."/>
            <person name="Hannenhalli S."/>
            <person name="Turner R."/>
            <person name="Yooseph S."/>
            <person name="Lu F."/>
            <person name="Nusskern D.R."/>
            <person name="Shue B.C."/>
            <person name="Zheng X.H."/>
            <person name="Zhong F."/>
            <person name="Delcher A.L."/>
            <person name="Huson D.H."/>
            <person name="Kravitz S.A."/>
            <person name="Mouchard L."/>
            <person name="Reinert K."/>
            <person name="Remington K.A."/>
            <person name="Clark A.G."/>
            <person name="Waterman M.S."/>
            <person name="Eichler E.E."/>
            <person name="Adams M.D."/>
            <person name="Hunkapiller M.W."/>
            <person name="Myers E.W."/>
            <person name="Venter J.C."/>
        </authorList>
    </citation>
    <scope>NUCLEOTIDE SEQUENCE [LARGE SCALE GENOMIC DNA]</scope>
</reference>
<reference key="6">
    <citation type="journal article" date="2004" name="Genome Res.">
        <title>The status, quality, and expansion of the NIH full-length cDNA project: the Mammalian Gene Collection (MGC).</title>
        <authorList>
            <consortium name="The MGC Project Team"/>
        </authorList>
    </citation>
    <scope>NUCLEOTIDE SEQUENCE [LARGE SCALE MRNA]</scope>
    <source>
        <tissue>Eye</tissue>
        <tissue>Mammary gland</tissue>
        <tissue>PNS</tissue>
    </source>
</reference>
<reference key="7">
    <citation type="journal article" date="1988" name="Proc. Natl. Acad. Sci. U.S.A.">
        <title>Two distinct genes for ADP/ATP translocase are expressed at the mRNA level in adult human liver.</title>
        <authorList>
            <person name="Houldsworth J."/>
            <person name="Attardi G."/>
        </authorList>
    </citation>
    <scope>NUCLEOTIDE SEQUENCE [MRNA] OF 1-37</scope>
    <source>
        <tissue>Liver</tissue>
    </source>
</reference>
<reference key="8">
    <citation type="submission" date="2004-10" db="UniProtKB">
        <authorList>
            <person name="Bienvenut W.V."/>
        </authorList>
    </citation>
    <scope>PROTEIN SEQUENCE OF 2-31; 34-43; 64-92; 141-147; 189-199 AND 273-296</scope>
    <scope>CLEAVAGE OF INITIATOR METHIONINE</scope>
    <scope>ACETYLATION AT GLY-2</scope>
    <scope>IDENTIFICATION BY MASS SPECTROMETRY</scope>
    <source>
        <tissue>B-cell lymphoma</tissue>
    </source>
</reference>
<reference key="9">
    <citation type="journal article" date="2004" name="Mitochondrion">
        <title>Mitochondrial membrane permeabilization by HIV-1 Vpr.</title>
        <authorList>
            <person name="Deniaud A."/>
            <person name="Brenner C."/>
            <person name="Kroemer G."/>
        </authorList>
    </citation>
    <scope>INTERACTION WITH HIV-1 VPR (MICROBIAL INFECTION)</scope>
</reference>
<reference key="10">
    <citation type="journal article" date="2009" name="Science">
        <title>Lysine acetylation targets protein complexes and co-regulates major cellular functions.</title>
        <authorList>
            <person name="Choudhary C."/>
            <person name="Kumar C."/>
            <person name="Gnad F."/>
            <person name="Nielsen M.L."/>
            <person name="Rehman M."/>
            <person name="Walther T.C."/>
            <person name="Olsen J.V."/>
            <person name="Mann M."/>
        </authorList>
    </citation>
    <scope>IDENTIFICATION BY MASS SPECTROMETRY [LARGE SCALE ANALYSIS]</scope>
</reference>
<reference key="11">
    <citation type="journal article" date="2011" name="BMC Syst. Biol.">
        <title>Initial characterization of the human central proteome.</title>
        <authorList>
            <person name="Burkard T.R."/>
            <person name="Planyavsky M."/>
            <person name="Kaupe I."/>
            <person name="Breitwieser F.P."/>
            <person name="Buerckstuemmer T."/>
            <person name="Bennett K.L."/>
            <person name="Superti-Furga G."/>
            <person name="Colinge J."/>
        </authorList>
    </citation>
    <scope>IDENTIFICATION BY MASS SPECTROMETRY [LARGE SCALE ANALYSIS]</scope>
</reference>
<reference key="12">
    <citation type="journal article" date="2011" name="Hum. Mol. Genet.">
        <title>adPEO mutations in ANT1 impair ADP-ATP translocation in muscle mitochondria.</title>
        <authorList>
            <person name="Kawamata H."/>
            <person name="Tiranti V."/>
            <person name="Magrane J."/>
            <person name="Chinopoulos C."/>
            <person name="Manfredi G."/>
        </authorList>
    </citation>
    <scope>FUNCTION</scope>
    <scope>TRANSPORTER ACTIVITY</scope>
    <scope>ACTIVITY REGULATION</scope>
    <scope>SUBCELLULAR LOCATION</scope>
    <scope>CHARACTERIZATION OF VARIANTS PEOA2 PRO-114 AND MET-289</scope>
</reference>
<reference key="13">
    <citation type="journal article" date="2012" name="J. Med. Genet.">
        <title>Complete loss of expression of the ANT1 gene causing cardiomyopathy and myopathy.</title>
        <authorList>
            <person name="Echaniz-Laguna A."/>
            <person name="Chassagne M."/>
            <person name="Ceresuela J."/>
            <person name="Rouvet I."/>
            <person name="Padet S."/>
            <person name="Acquaviva C."/>
            <person name="Nataf S."/>
            <person name="Vinzio S."/>
            <person name="Bozon D."/>
            <person name="Mousson de Camaret B."/>
        </authorList>
    </citation>
    <scope>INVOLVEMENT IN MTDPS12B</scope>
</reference>
<reference key="14">
    <citation type="journal article" date="2015" name="Proteomics">
        <title>N-terminome analysis of the human mitochondrial proteome.</title>
        <authorList>
            <person name="Vaca Jacome A.S."/>
            <person name="Rabilloud T."/>
            <person name="Schaeffer-Reiss C."/>
            <person name="Rompais M."/>
            <person name="Ayoub D."/>
            <person name="Lane L."/>
            <person name="Bairoch A."/>
            <person name="Van Dorsselaer A."/>
            <person name="Carapito C."/>
        </authorList>
    </citation>
    <scope>IDENTIFICATION BY MASS SPECTROMETRY [LARGE SCALE ANALYSIS]</scope>
</reference>
<reference key="15">
    <citation type="journal article" date="2016" name="Am. J. Hum. Genet.">
        <title>Recurrent de novo dominant mutations in SLC25A4 cause severe early-onset mitochondrial disease and loss of mitochondrial DNA copy number.</title>
        <authorList>
            <person name="Thompson K."/>
            <person name="Majd H."/>
            <person name="Dallabona C."/>
            <person name="Reinson K."/>
            <person name="King M.S."/>
            <person name="Alston C.L."/>
            <person name="He L."/>
            <person name="Lodi T."/>
            <person name="Jones S.A."/>
            <person name="Fattal-Valevski A."/>
            <person name="Fraenkel N.D."/>
            <person name="Saada A."/>
            <person name="Haham A."/>
            <person name="Isohanni P."/>
            <person name="Vara R."/>
            <person name="Barbosa I.A."/>
            <person name="Simpson M.A."/>
            <person name="Deshpande C."/>
            <person name="Puusepp S."/>
            <person name="Bonnen P.E."/>
            <person name="Rodenburg R.J."/>
            <person name="Suomalainen A."/>
            <person name="Ounap K."/>
            <person name="Elpeleg O."/>
            <person name="Ferrero I."/>
            <person name="McFarland R."/>
            <person name="Kunji E.R."/>
            <person name="Taylor R.W."/>
        </authorList>
    </citation>
    <scope>FUNCTION</scope>
    <scope>INVOLVEMENT IN MTDPS12A</scope>
    <scope>VARIANTS MTDPS12A HIS-80 AND GLY-235</scope>
    <scope>CHARACTERIZATION OF VARIANTS MTDPS12A HIS-80 AND GLY-235</scope>
    <scope>CHARACTERIZATION OF VARIANTS PEOA2 ASP-90; PRO-98; GLY-104 AND PRO-114</scope>
    <scope>CHARACTERIZATION OF VARIANTS MTDPS12B ASP-123 AND PRO-236</scope>
</reference>
<reference key="16">
    <citation type="journal article" date="2016" name="Sci. Rep.">
        <title>TSPO ligands stimulate ZnPPIX transport and ROS accumulation leading to the inhibition of P. falciparum growth in human blood.</title>
        <authorList>
            <person name="Marginedas-Freixa I."/>
            <person name="Hattab C."/>
            <person name="Bouyer G."/>
            <person name="Halle F."/>
            <person name="Chene A."/>
            <person name="Lefevre S.D."/>
            <person name="Cambot M."/>
            <person name="Cueff A."/>
            <person name="Schmitt M."/>
            <person name="Gamain B."/>
            <person name="Lacapere J.J."/>
            <person name="Egee S."/>
            <person name="Bihel F."/>
            <person name="Le Van Kim C."/>
            <person name="Ostuni M.A."/>
        </authorList>
    </citation>
    <scope>SUBCELLULAR LOCATION</scope>
    <scope>TISSUE SPECIFICITY</scope>
    <scope>IDENTIFICATION BY MASS SPECTROMETRY</scope>
</reference>
<reference key="17">
    <citation type="journal article" date="2020" name="Neuron">
        <title>Human-specific ARHGAP11B acts in mitochondria to expand neocortical progenitors by glutaminolysis.</title>
        <authorList>
            <person name="Namba T."/>
            <person name="Doczi J."/>
            <person name="Pinson A."/>
            <person name="Xing L."/>
            <person name="Kalebic N."/>
            <person name="Wilsch-Braeuninger M."/>
            <person name="Long K.R."/>
            <person name="Vaid S."/>
            <person name="Lauer J."/>
            <person name="Bogdanova A."/>
            <person name="Borgonovo B."/>
            <person name="Shevchenko A."/>
            <person name="Keller P."/>
            <person name="Drechsel D."/>
            <person name="Kurzchalia T."/>
            <person name="Wimberger P."/>
            <person name="Chinopoulos C."/>
            <person name="Huttner W.B."/>
        </authorList>
    </citation>
    <scope>FUNCTION</scope>
    <scope>INTERACTION WITH ARHGAP11B</scope>
</reference>
<reference key="18">
    <citation type="journal article" date="2000" name="Science">
        <title>Role of adenine nucleotide translocator 1 in mtDNA maintenance.</title>
        <authorList>
            <person name="Kaukonen J."/>
            <person name="Juselius J.K."/>
            <person name="Tiranti V."/>
            <person name="Kyttala A."/>
            <person name="Zeviani M."/>
            <person name="Comi G.P."/>
            <person name="Keranen J."/>
            <person name="Peltonen L."/>
            <person name="Suomalainen A."/>
        </authorList>
    </citation>
    <scope>VARIANTS PEOA2 PRO-114 AND MET-289</scope>
</reference>
<reference key="19">
    <citation type="journal article" date="2001" name="Neurology">
        <title>A novel missense adenine nucleotide translocator-1 gene mutation in a Greek adPEO family.</title>
        <authorList>
            <person name="Napoli L."/>
            <person name="Bordoni A."/>
            <person name="Zeviani M."/>
            <person name="Hadjigeorgiou G.M."/>
            <person name="Sciacco M."/>
            <person name="Tiranti V."/>
            <person name="Terentiou A."/>
            <person name="Moggio M."/>
            <person name="Papadimitriou A."/>
            <person name="Scarlato G."/>
            <person name="Comi G.P."/>
        </authorList>
    </citation>
    <scope>VARIANT PEOA2 PRO-98</scope>
</reference>
<reference key="20">
    <citation type="journal article" date="2002" name="Ann. Neurol.">
        <title>A novel D104G mutation in the adenine nucleotide translocator 1 gene in autosomal dominant progressive external ophthalmoplegia patients with mitochondrial DNA with multiple deletions.</title>
        <authorList>
            <person name="Komaki H."/>
            <person name="Fukazawa T."/>
            <person name="Houzen H."/>
            <person name="Yoshida K."/>
            <person name="Nonaka I."/>
            <person name="Goto Y."/>
        </authorList>
    </citation>
    <scope>VARIANT PEOA2 GLY-104</scope>
</reference>
<reference key="21">
    <citation type="journal article" date="2003" name="Neurology">
        <title>Mutations of ANT1, Twinkle, and POLG1 in sporadic progressive external ophthalmoplegia (PEO).</title>
        <authorList>
            <person name="Agostino A."/>
            <person name="Valletta L."/>
            <person name="Chinnery P.F."/>
            <person name="Ferrari G."/>
            <person name="Carrara F."/>
            <person name="Taylor R.W."/>
            <person name="Schaefer A.M."/>
            <person name="Turnbull D.M."/>
            <person name="Tiranti V."/>
            <person name="Zeviani M."/>
        </authorList>
    </citation>
    <scope>VARIANT PEOA2 MET-289</scope>
</reference>
<reference key="22">
    <citation type="journal article" date="2005" name="Hum. Mol. Genet.">
        <title>Complete loss-of-function of the heart/muscle-specific adenine nucleotide translocator is associated with mitochondrial myopathy and cardiomyopathy.</title>
        <authorList>
            <person name="Palmieri L."/>
            <person name="Alberio S."/>
            <person name="Pisano I."/>
            <person name="Lodi T."/>
            <person name="Meznaric-Petrusa M."/>
            <person name="Zidar J."/>
            <person name="Santoro A."/>
            <person name="Scarcia P."/>
            <person name="Fontanesi F."/>
            <person name="Lamantea E."/>
            <person name="Ferrero I."/>
            <person name="Zeviani M."/>
        </authorList>
    </citation>
    <scope>VARIANT MTDPS12B ASP-123</scope>
</reference>
<reference key="23">
    <citation type="journal article" date="2005" name="Neuromuscul. Disord.">
        <title>A novel ANT1 gene mutation with probable germline mosaicism in autosomal dominant progressive external ophthalmoplegia.</title>
        <authorList>
            <person name="Deschauer M."/>
            <person name="Hudson G."/>
            <person name="Mueller T."/>
            <person name="Taylor R.W."/>
            <person name="Chinnery P.F."/>
            <person name="Zierz S."/>
        </authorList>
    </citation>
    <scope>VARIANT PEOA2 ASP-90</scope>
</reference>
<reference key="24">
    <citation type="journal article" date="2008" name="J. Neurol.">
        <title>Novel Twinkle (PEO1) gene mutations in Mendelian progressive external ophthalmoplegia.</title>
        <authorList>
            <person name="Virgilio R."/>
            <person name="Ronchi D."/>
            <person name="Hadjigeorgiou G.M."/>
            <person name="Bordoni A."/>
            <person name="Saladino F."/>
            <person name="Moggio M."/>
            <person name="Adobbati L."/>
            <person name="Kafetsouli D."/>
            <person name="Tsironi E."/>
            <person name="Previtali S."/>
            <person name="Papadimitriou A."/>
            <person name="Bresolin N."/>
            <person name="Comi G.P."/>
        </authorList>
    </citation>
    <scope>VARIANTS PEOA2 PRO-98 AND PRO-114</scope>
</reference>
<reference key="25">
    <citation type="journal article" date="2015" name="JIMD Rep.">
        <title>Two novel mutations in the SLC25A4 gene in a patient with mitochondrial myopathy.</title>
        <authorList>
            <person name="Koerver-Keularts I.M."/>
            <person name="de Visser M."/>
            <person name="Bakker H.D."/>
            <person name="Wanders R.J."/>
            <person name="Vansenne F."/>
            <person name="Scholte H.R."/>
            <person name="Dorland L."/>
            <person name="Nicolaes G.A."/>
            <person name="Spaapen L.M."/>
            <person name="Smeets H.J."/>
            <person name="Hendrickx A.T."/>
            <person name="van den Bosch B.J."/>
        </authorList>
    </citation>
    <scope>VARIANT MTDPS12B PRO-236</scope>
</reference>
<comment type="function">
    <text evidence="1 3 14 18 19">ADP:ATP antiporter that mediates import of ADP into the mitochondrial matrix for ATP synthesis, and export of ATP out to fuel the cell (PubMed:21586654, PubMed:27693233). Cycles between the cytoplasmic-open state (c-state) and the matrix-open state (m-state): operates by the alternating access mechanism with a single substrate-binding site intermittently exposed to either the cytosolic (c-state) or matrix (m-state) side of the inner mitochondrial membrane (By similarity). In addition to its ADP:ATP antiporter activity, also involved in mitochondrial uncoupling and mitochondrial permeability transition pore (mPTP) activity (PubMed:31883789). Plays a role in mitochondrial uncoupling by acting as a proton transporter: proton transport uncouples the proton flows via the electron transport chain and ATP synthase to reduce the efficiency of ATP production and cause mitochondrial thermogenesis (By similarity). Proton transporter activity is inhibited by ADP:ATP antiporter activity, suggesting that SLC25A4/ANT1 acts as a master regulator of mitochondrial energy output by maintaining a delicate balance between ATP production (ADP:ATP antiporter activity) and thermogenesis (proton transporter activity) (By similarity). Proton transporter activity requires free fatty acids as cofactor, but does not transport it (By similarity). Also plays a key role in mPTP opening, a non-specific pore that enables free passage of the mitochondrial membranes to solutes of up to 1.5 kDa, and which contributes to cell death (PubMed:31883789). It is however unclear if SLC25A4/ANT1 constitutes a pore-forming component of mPTP or regulates it (By similarity). Acts as a regulator of mitophagy independently of ADP:ATP antiporter activity: promotes mitophagy via interaction with TIMM44, leading to inhibit the presequence translocase TIMM23, thereby promoting stabilization of PINK1 (By similarity).</text>
</comment>
<comment type="catalytic activity">
    <reaction evidence="14">
        <text>ADP(in) + ATP(out) = ADP(out) + ATP(in)</text>
        <dbReference type="Rhea" id="RHEA:34999"/>
        <dbReference type="ChEBI" id="CHEBI:30616"/>
        <dbReference type="ChEBI" id="CHEBI:456216"/>
    </reaction>
</comment>
<comment type="catalytic activity">
    <reaction evidence="3">
        <text>H(+)(in) = H(+)(out)</text>
        <dbReference type="Rhea" id="RHEA:34979"/>
        <dbReference type="ChEBI" id="CHEBI:15378"/>
    </reaction>
</comment>
<comment type="activity regulation">
    <text evidence="1 3 14">The matrix-open state (m-state) is inhibited by the membrane-permeable bongkrekic acid (BKA) (By similarity). The cytoplasmic-open state (c-state) is inhibited by the membrane-impermeable toxic inhibitor carboxyatractyloside (CATR) (PubMed:21586654). Proton transporter activity is inhibited by ADP:ATP antiporter activity (By similarity).</text>
</comment>
<comment type="subunit">
    <text evidence="1 2 3 19">Monomer (By similarity). Found in a complex with ARL2, ARL2BP and SLC25A4/ANT1 (By similarity). Interacts with ARL2BP (By similarity). Interacts with ARHGAP11B, thereby inhibiting the mitochondrial permeability transition pore (mPTP) (PubMed:31883789). Interacts with TIMM44; leading to inhibit the presequence translocase TIMM23, thereby promoting stabilization of PINK1 (By similarity).</text>
</comment>
<comment type="subunit">
    <text evidence="11">(Microbial infection) Interacts with HIV-1 Vpr.</text>
</comment>
<comment type="interaction">
    <interactant intactId="EBI-359074">
        <id>P12235</id>
    </interactant>
    <interactant intactId="EBI-5323863">
        <id>Q5S007</id>
        <label>LRRK2</label>
    </interactant>
    <organismsDiffer>false</organismsDiffer>
    <experiments>2</experiments>
</comment>
<comment type="interaction">
    <interactant intactId="EBI-359074">
        <id>P12235</id>
    </interactant>
    <interactant intactId="EBI-16085263">
        <id>P22736-1</id>
        <label>NR4A1</label>
    </interactant>
    <organismsDiffer>false</organismsDiffer>
    <experiments>2</experiments>
</comment>
<comment type="subcellular location">
    <subcellularLocation>
        <location evidence="14">Mitochondrion inner membrane</location>
        <topology evidence="5">Multi-pass membrane protein</topology>
    </subcellularLocation>
    <subcellularLocation>
        <location evidence="17">Membrane</location>
        <topology evidence="5">Multi-pass membrane protein</topology>
    </subcellularLocation>
    <text evidence="3 17">The complex formed with ARL2BP, ARL2 and SLC25A4/ANT1 is expressed in mitochondria (By similarity). May localize to non-mitochondrial membranes (PubMed:27641616).</text>
</comment>
<comment type="tissue specificity">
    <text evidence="17">Expressed in erythrocytes (at protein level).</text>
</comment>
<comment type="domain">
    <text evidence="2">The transmembrane helices are not perpendicular to the plane of the membrane, but cross the membrane at an angle. Odd-numbered transmembrane helices exhibit a sharp kink, due to the presence of a conserved proline residue.</text>
</comment>
<comment type="PTM">
    <text evidence="3">Under cell death induction, transglutaminated by TGM2. Transglutamination leads to formation of covalent cross-links between a glutamine and the epsilon-amino group of a lysine residue, forming polymers.</text>
</comment>
<comment type="disease" evidence="6 7 8 9 10 13 14 18">
    <disease id="DI-00944">
        <name>Progressive external ophthalmoplegia with mitochondrial DNA deletions, autosomal dominant, 2</name>
        <acronym>PEOA2</acronym>
        <description>A disorder characterized by progressive weakness of ocular muscles and levator muscle of the upper eyelid. In a minority of cases, it is associated with skeletal myopathy, which predominantly involves axial or proximal muscles and which causes abnormal fatigability and even permanent muscle weakness. Ragged-red fibers and atrophy are found on muscle biopsy. A large proportion of chronic ophthalmoplegias are associated with other symptoms, leading to a multisystemic pattern of this disease. Additional symptoms are variable, and may include cataracts, hearing loss, sensory axonal neuropathy, ataxia, depression, hypogonadism, and parkinsonism.</description>
        <dbReference type="MIM" id="609283"/>
    </disease>
    <text>The disease is caused by variants affecting the gene represented in this entry.</text>
</comment>
<comment type="disease" evidence="12 15 16 18">
    <disease id="DI-03934">
        <name>Mitochondrial DNA depletion syndrome 12B, cardiomyopathic type</name>
        <acronym>MTDPS12B</acronym>
        <description>An autosomal recessive mitochondrial disorder characterized by childhood onset of slowly progressive hypertrophic cardiomyopathy and generalized skeletal myopathy resulting in exercise intolerance and, in some patients, muscle weakness and atrophy. Skeletal muscle biopsy shows ragged red fibers, mtDNA depletion, and accumulation of abnormal mitochondria.</description>
        <dbReference type="MIM" id="615418"/>
    </disease>
    <text>The disease is caused by variants affecting the gene represented in this entry.</text>
</comment>
<comment type="disease" evidence="18">
    <disease id="DI-04880">
        <name>Mitochondrial DNA depletion syndrome 12A, cardiomyopathic type</name>
        <acronym>MTDPS12A</acronym>
        <description>An autosomal dominant mitochondrial disorder characterized by severe hypotonia due to mitochondrial dysfunction apparent at birth. Affected infants have respiratory insufficiency requiring mechanical ventilation and have poor or no motor development. Many die in infancy, and those that survive have profound hypotonia with significant muscle weakness and inability to walk independently. Some patients develop hypertrophic cardiomyopathy. Muscle samples show mtDNA depletion and severe combined mitochondrial respiratory chain deficiencies.</description>
        <dbReference type="MIM" id="617184"/>
    </disease>
    <text>The disease is caused by variants affecting the gene represented in this entry.</text>
</comment>
<comment type="similarity">
    <text evidence="24">Belongs to the mitochondrial carrier (TC 2.A.29) family.</text>
</comment>
<evidence type="ECO:0000250" key="1">
    <source>
        <dbReference type="UniProtKB" id="G2QNH0"/>
    </source>
</evidence>
<evidence type="ECO:0000250" key="2">
    <source>
        <dbReference type="UniProtKB" id="P02722"/>
    </source>
</evidence>
<evidence type="ECO:0000250" key="3">
    <source>
        <dbReference type="UniProtKB" id="P48962"/>
    </source>
</evidence>
<evidence type="ECO:0000250" key="4">
    <source>
        <dbReference type="UniProtKB" id="Q05962"/>
    </source>
</evidence>
<evidence type="ECO:0000255" key="5"/>
<evidence type="ECO:0000269" key="6">
    <source>
    </source>
</evidence>
<evidence type="ECO:0000269" key="7">
    <source>
    </source>
</evidence>
<evidence type="ECO:0000269" key="8">
    <source>
    </source>
</evidence>
<evidence type="ECO:0000269" key="9">
    <source>
    </source>
</evidence>
<evidence type="ECO:0000269" key="10">
    <source>
    </source>
</evidence>
<evidence type="ECO:0000269" key="11">
    <source>
    </source>
</evidence>
<evidence type="ECO:0000269" key="12">
    <source>
    </source>
</evidence>
<evidence type="ECO:0000269" key="13">
    <source>
    </source>
</evidence>
<evidence type="ECO:0000269" key="14">
    <source>
    </source>
</evidence>
<evidence type="ECO:0000269" key="15">
    <source>
    </source>
</evidence>
<evidence type="ECO:0000269" key="16">
    <source>
    </source>
</evidence>
<evidence type="ECO:0000269" key="17">
    <source>
    </source>
</evidence>
<evidence type="ECO:0000269" key="18">
    <source>
    </source>
</evidence>
<evidence type="ECO:0000269" key="19">
    <source>
    </source>
</evidence>
<evidence type="ECO:0000269" key="20">
    <source ref="8"/>
</evidence>
<evidence type="ECO:0000303" key="21">
    <source>
    </source>
</evidence>
<evidence type="ECO:0000303" key="22">
    <source>
    </source>
</evidence>
<evidence type="ECO:0000303" key="23">
    <source>
    </source>
</evidence>
<evidence type="ECO:0000305" key="24"/>
<evidence type="ECO:0000312" key="25">
    <source>
        <dbReference type="HGNC" id="HGNC:10990"/>
    </source>
</evidence>
<keyword id="KW-0007">Acetylation</keyword>
<keyword id="KW-0050">Antiport</keyword>
<keyword id="KW-0122">Cardiomyopathy</keyword>
<keyword id="KW-0903">Direct protein sequencing</keyword>
<keyword id="KW-0225">Disease variant</keyword>
<keyword id="KW-0945">Host-virus interaction</keyword>
<keyword id="KW-0472">Membrane</keyword>
<keyword id="KW-0488">Methylation</keyword>
<keyword id="KW-0496">Mitochondrion</keyword>
<keyword id="KW-0999">Mitochondrion inner membrane</keyword>
<keyword id="KW-0597">Phosphoprotein</keyword>
<keyword id="KW-1274">Primary mitochondrial disease</keyword>
<keyword id="KW-0935">Progressive external ophthalmoplegia</keyword>
<keyword id="KW-1267">Proteomics identification</keyword>
<keyword id="KW-1185">Reference proteome</keyword>
<keyword id="KW-0677">Repeat</keyword>
<keyword id="KW-0702">S-nitrosylation</keyword>
<keyword id="KW-0812">Transmembrane</keyword>
<keyword id="KW-1133">Transmembrane helix</keyword>
<keyword id="KW-0813">Transport</keyword>
<dbReference type="EMBL" id="J02966">
    <property type="protein sequence ID" value="AAA61223.1"/>
    <property type="molecule type" value="mRNA"/>
</dbReference>
<dbReference type="EMBL" id="J04982">
    <property type="protein sequence ID" value="AAA51736.1"/>
    <property type="molecule type" value="Genomic_DNA"/>
</dbReference>
<dbReference type="EMBL" id="HQ206346">
    <property type="protein sequence ID" value="ADP92294.1"/>
    <property type="molecule type" value="Genomic_DNA"/>
</dbReference>
<dbReference type="EMBL" id="HQ206347">
    <property type="protein sequence ID" value="ADP92295.1"/>
    <property type="molecule type" value="Genomic_DNA"/>
</dbReference>
<dbReference type="EMBL" id="HQ206348">
    <property type="protein sequence ID" value="ADP92296.1"/>
    <property type="molecule type" value="Genomic_DNA"/>
</dbReference>
<dbReference type="EMBL" id="HQ206349">
    <property type="protein sequence ID" value="ADP92297.1"/>
    <property type="molecule type" value="Genomic_DNA"/>
</dbReference>
<dbReference type="EMBL" id="HQ206350">
    <property type="protein sequence ID" value="ADP92298.1"/>
    <property type="molecule type" value="Genomic_DNA"/>
</dbReference>
<dbReference type="EMBL" id="HQ206351">
    <property type="protein sequence ID" value="ADP92299.1"/>
    <property type="molecule type" value="Genomic_DNA"/>
</dbReference>
<dbReference type="EMBL" id="HQ206352">
    <property type="protein sequence ID" value="ADP92300.1"/>
    <property type="molecule type" value="Genomic_DNA"/>
</dbReference>
<dbReference type="EMBL" id="HQ206353">
    <property type="protein sequence ID" value="ADP92301.1"/>
    <property type="molecule type" value="Genomic_DNA"/>
</dbReference>
<dbReference type="EMBL" id="HQ206354">
    <property type="protein sequence ID" value="ADP92302.1"/>
    <property type="molecule type" value="Genomic_DNA"/>
</dbReference>
<dbReference type="EMBL" id="HQ206355">
    <property type="protein sequence ID" value="ADP92303.1"/>
    <property type="molecule type" value="Genomic_DNA"/>
</dbReference>
<dbReference type="EMBL" id="HQ206356">
    <property type="protein sequence ID" value="ADP92304.1"/>
    <property type="molecule type" value="Genomic_DNA"/>
</dbReference>
<dbReference type="EMBL" id="HQ206357">
    <property type="protein sequence ID" value="ADP92305.1"/>
    <property type="molecule type" value="Genomic_DNA"/>
</dbReference>
<dbReference type="EMBL" id="HQ206358">
    <property type="protein sequence ID" value="ADP92306.1"/>
    <property type="molecule type" value="Genomic_DNA"/>
</dbReference>
<dbReference type="EMBL" id="HQ206359">
    <property type="protein sequence ID" value="ADP92307.1"/>
    <property type="molecule type" value="Genomic_DNA"/>
</dbReference>
<dbReference type="EMBL" id="HQ206360">
    <property type="protein sequence ID" value="ADP92308.1"/>
    <property type="molecule type" value="Genomic_DNA"/>
</dbReference>
<dbReference type="EMBL" id="HQ206361">
    <property type="protein sequence ID" value="ADP92309.1"/>
    <property type="molecule type" value="Genomic_DNA"/>
</dbReference>
<dbReference type="EMBL" id="HQ206362">
    <property type="protein sequence ID" value="ADP92310.1"/>
    <property type="molecule type" value="Genomic_DNA"/>
</dbReference>
<dbReference type="EMBL" id="HQ206363">
    <property type="protein sequence ID" value="ADP92311.1"/>
    <property type="molecule type" value="Genomic_DNA"/>
</dbReference>
<dbReference type="EMBL" id="HQ206364">
    <property type="protein sequence ID" value="ADP92312.1"/>
    <property type="molecule type" value="Genomic_DNA"/>
</dbReference>
<dbReference type="EMBL" id="HQ206365">
    <property type="protein sequence ID" value="ADP92313.1"/>
    <property type="molecule type" value="Genomic_DNA"/>
</dbReference>
<dbReference type="EMBL" id="HQ206366">
    <property type="protein sequence ID" value="ADP92314.1"/>
    <property type="molecule type" value="Genomic_DNA"/>
</dbReference>
<dbReference type="EMBL" id="HQ206367">
    <property type="protein sequence ID" value="ADP92315.1"/>
    <property type="molecule type" value="Genomic_DNA"/>
</dbReference>
<dbReference type="EMBL" id="HQ206368">
    <property type="protein sequence ID" value="ADP92316.1"/>
    <property type="molecule type" value="Genomic_DNA"/>
</dbReference>
<dbReference type="EMBL" id="HQ206369">
    <property type="protein sequence ID" value="ADP92317.1"/>
    <property type="molecule type" value="Genomic_DNA"/>
</dbReference>
<dbReference type="EMBL" id="HQ206370">
    <property type="protein sequence ID" value="ADP92318.1"/>
    <property type="molecule type" value="Genomic_DNA"/>
</dbReference>
<dbReference type="EMBL" id="HQ206371">
    <property type="protein sequence ID" value="ADP92319.1"/>
    <property type="molecule type" value="Genomic_DNA"/>
</dbReference>
<dbReference type="EMBL" id="HQ206372">
    <property type="protein sequence ID" value="ADP92320.1"/>
    <property type="molecule type" value="Genomic_DNA"/>
</dbReference>
<dbReference type="EMBL" id="HQ206373">
    <property type="protein sequence ID" value="ADP92321.1"/>
    <property type="molecule type" value="Genomic_DNA"/>
</dbReference>
<dbReference type="EMBL" id="HQ206374">
    <property type="protein sequence ID" value="ADP92322.1"/>
    <property type="molecule type" value="Genomic_DNA"/>
</dbReference>
<dbReference type="EMBL" id="HQ206375">
    <property type="protein sequence ID" value="ADP92323.1"/>
    <property type="molecule type" value="Genomic_DNA"/>
</dbReference>
<dbReference type="EMBL" id="HQ206376">
    <property type="protein sequence ID" value="ADP92324.1"/>
    <property type="molecule type" value="Genomic_DNA"/>
</dbReference>
<dbReference type="EMBL" id="HQ206377">
    <property type="protein sequence ID" value="ADP92325.1"/>
    <property type="molecule type" value="Genomic_DNA"/>
</dbReference>
<dbReference type="EMBL" id="HQ206378">
    <property type="protein sequence ID" value="ADP92326.1"/>
    <property type="molecule type" value="Genomic_DNA"/>
</dbReference>
<dbReference type="EMBL" id="HQ206379">
    <property type="protein sequence ID" value="ADP92327.1"/>
    <property type="molecule type" value="Genomic_DNA"/>
</dbReference>
<dbReference type="EMBL" id="HQ206380">
    <property type="protein sequence ID" value="ADP92328.1"/>
    <property type="molecule type" value="Genomic_DNA"/>
</dbReference>
<dbReference type="EMBL" id="HQ206381">
    <property type="protein sequence ID" value="ADP92329.1"/>
    <property type="molecule type" value="Genomic_DNA"/>
</dbReference>
<dbReference type="EMBL" id="HQ206382">
    <property type="protein sequence ID" value="ADP92330.1"/>
    <property type="molecule type" value="Genomic_DNA"/>
</dbReference>
<dbReference type="EMBL" id="HQ206383">
    <property type="protein sequence ID" value="ADP92331.1"/>
    <property type="molecule type" value="Genomic_DNA"/>
</dbReference>
<dbReference type="EMBL" id="HQ206384">
    <property type="protein sequence ID" value="ADP92332.1"/>
    <property type="molecule type" value="Genomic_DNA"/>
</dbReference>
<dbReference type="EMBL" id="HQ206385">
    <property type="protein sequence ID" value="ADP92333.1"/>
    <property type="molecule type" value="Genomic_DNA"/>
</dbReference>
<dbReference type="EMBL" id="CH471056">
    <property type="protein sequence ID" value="EAX04655.1"/>
    <property type="molecule type" value="Genomic_DNA"/>
</dbReference>
<dbReference type="EMBL" id="CH471056">
    <property type="protein sequence ID" value="EAX04656.1"/>
    <property type="molecule type" value="Genomic_DNA"/>
</dbReference>
<dbReference type="EMBL" id="BC008664">
    <property type="protein sequence ID" value="AAH08664.1"/>
    <property type="molecule type" value="mRNA"/>
</dbReference>
<dbReference type="EMBL" id="BC061589">
    <property type="protein sequence ID" value="AAH61589.1"/>
    <property type="molecule type" value="mRNA"/>
</dbReference>
<dbReference type="EMBL" id="BC063643">
    <property type="protein sequence ID" value="AAH63643.1"/>
    <property type="molecule type" value="mRNA"/>
</dbReference>
<dbReference type="EMBL" id="J03593">
    <property type="protein sequence ID" value="AAA36751.1"/>
    <property type="molecule type" value="mRNA"/>
</dbReference>
<dbReference type="CCDS" id="CCDS34114.1"/>
<dbReference type="PIR" id="A44778">
    <property type="entry name" value="A44778"/>
</dbReference>
<dbReference type="RefSeq" id="NP_001142.2">
    <property type="nucleotide sequence ID" value="NM_001151.4"/>
</dbReference>
<dbReference type="SMR" id="P12235"/>
<dbReference type="BioGRID" id="106788">
    <property type="interactions" value="349"/>
</dbReference>
<dbReference type="DIP" id="DIP-33116N"/>
<dbReference type="FunCoup" id="P12235">
    <property type="interactions" value="1978"/>
</dbReference>
<dbReference type="IntAct" id="P12235">
    <property type="interactions" value="122"/>
</dbReference>
<dbReference type="MINT" id="P12235"/>
<dbReference type="STRING" id="9606.ENSP00000281456"/>
<dbReference type="DrugBank" id="DB01736">
    <property type="generic name" value="[3-(Dodecanoylamino)Propyl](Hydroxy)Dimethylammonium"/>
</dbReference>
<dbReference type="DrugBank" id="DB00171">
    <property type="generic name" value="ATP"/>
</dbReference>
<dbReference type="DrugBank" id="DB02426">
    <property type="generic name" value="Carboxyatractyloside"/>
</dbReference>
<dbReference type="DrugBank" id="DB00720">
    <property type="generic name" value="Clodronic acid"/>
</dbReference>
<dbReference type="DrugBank" id="DB04178">
    <property type="generic name" value="Di-Stearoyl-3-Sn-Phosphatidylcholine"/>
</dbReference>
<dbReference type="DrugBank" id="DB01077">
    <property type="generic name" value="Etidronic acid"/>
</dbReference>
<dbReference type="DrugBank" id="DB03429">
    <property type="generic name" value="Tetrastearoyl cardiolipin"/>
</dbReference>
<dbReference type="DrugCentral" id="P12235"/>
<dbReference type="MoonProt" id="P12235"/>
<dbReference type="TCDB" id="2.A.29.1.2">
    <property type="family name" value="the mitochondrial carrier (mc) family"/>
</dbReference>
<dbReference type="GlyGen" id="P12235">
    <property type="glycosylation" value="1 site, 1 O-linked glycan (1 site)"/>
</dbReference>
<dbReference type="iPTMnet" id="P12235"/>
<dbReference type="MetOSite" id="P12235"/>
<dbReference type="PhosphoSitePlus" id="P12235"/>
<dbReference type="SwissPalm" id="P12235"/>
<dbReference type="BioMuta" id="SLC25A4"/>
<dbReference type="DMDM" id="113455"/>
<dbReference type="jPOST" id="P12235"/>
<dbReference type="MassIVE" id="P12235"/>
<dbReference type="PaxDb" id="9606-ENSP00000281456"/>
<dbReference type="PeptideAtlas" id="P12235"/>
<dbReference type="ProteomicsDB" id="52836"/>
<dbReference type="Pumba" id="P12235"/>
<dbReference type="TopDownProteomics" id="P12235"/>
<dbReference type="Antibodypedia" id="28911">
    <property type="antibodies" value="155 antibodies from 24 providers"/>
</dbReference>
<dbReference type="DNASU" id="291"/>
<dbReference type="Ensembl" id="ENST00000281456.11">
    <property type="protein sequence ID" value="ENSP00000281456.5"/>
    <property type="gene ID" value="ENSG00000151729.11"/>
</dbReference>
<dbReference type="GeneID" id="291"/>
<dbReference type="KEGG" id="hsa:291"/>
<dbReference type="MANE-Select" id="ENST00000281456.11">
    <property type="protein sequence ID" value="ENSP00000281456.5"/>
    <property type="RefSeq nucleotide sequence ID" value="NM_001151.4"/>
    <property type="RefSeq protein sequence ID" value="NP_001142.2"/>
</dbReference>
<dbReference type="UCSC" id="uc003ixd.4">
    <property type="organism name" value="human"/>
</dbReference>
<dbReference type="AGR" id="HGNC:10990"/>
<dbReference type="CTD" id="291"/>
<dbReference type="DisGeNET" id="291"/>
<dbReference type="GeneCards" id="SLC25A4"/>
<dbReference type="HGNC" id="HGNC:10990">
    <property type="gene designation" value="SLC25A4"/>
</dbReference>
<dbReference type="HPA" id="ENSG00000151729">
    <property type="expression patterns" value="Group enriched (heart muscle, skeletal muscle, tongue)"/>
</dbReference>
<dbReference type="MalaCards" id="SLC25A4"/>
<dbReference type="MIM" id="103220">
    <property type="type" value="gene"/>
</dbReference>
<dbReference type="MIM" id="609283">
    <property type="type" value="phenotype"/>
</dbReference>
<dbReference type="MIM" id="615418">
    <property type="type" value="phenotype"/>
</dbReference>
<dbReference type="MIM" id="617184">
    <property type="type" value="phenotype"/>
</dbReference>
<dbReference type="neXtProt" id="NX_P12235"/>
<dbReference type="OpenTargets" id="ENSG00000151729"/>
<dbReference type="Orphanet" id="254892">
    <property type="disease" value="Autosomal dominant progressive external ophthalmoplegia"/>
</dbReference>
<dbReference type="Orphanet" id="1369">
    <property type="disease" value="Congenital cataract-hypertrophic cardiomyopathy-mitochondrial myopathy syndrome"/>
</dbReference>
<dbReference type="PharmGKB" id="PA35866"/>
<dbReference type="VEuPathDB" id="HostDB:ENSG00000151729"/>
<dbReference type="eggNOG" id="KOG0749">
    <property type="taxonomic scope" value="Eukaryota"/>
</dbReference>
<dbReference type="GeneTree" id="ENSGT00940000154622"/>
<dbReference type="InParanoid" id="P12235"/>
<dbReference type="OMA" id="HPAMYQR"/>
<dbReference type="OrthoDB" id="270584at2759"/>
<dbReference type="PAN-GO" id="P12235">
    <property type="GO annotations" value="4 GO annotations based on evolutionary models"/>
</dbReference>
<dbReference type="PhylomeDB" id="P12235"/>
<dbReference type="TreeFam" id="TF300743"/>
<dbReference type="PathwayCommons" id="P12235"/>
<dbReference type="Reactome" id="R-HSA-1268020">
    <property type="pathway name" value="Mitochondrial protein import"/>
</dbReference>
<dbReference type="Reactome" id="R-HSA-166187">
    <property type="pathway name" value="Mitochondrial Uncoupling"/>
</dbReference>
<dbReference type="Reactome" id="R-HSA-180897">
    <property type="pathway name" value="Vpr-mediated induction of apoptosis by mitochondrial outer membrane permeabilization"/>
</dbReference>
<dbReference type="Reactome" id="R-HSA-83936">
    <property type="pathway name" value="Transport of nucleosides and free purine and pyrimidine bases across the plasma membrane"/>
</dbReference>
<dbReference type="SignaLink" id="P12235"/>
<dbReference type="SIGNOR" id="P12235"/>
<dbReference type="BioGRID-ORCS" id="291">
    <property type="hits" value="14 hits in 1168 CRISPR screens"/>
</dbReference>
<dbReference type="CD-CODE" id="91857CE7">
    <property type="entry name" value="Nucleolus"/>
</dbReference>
<dbReference type="CD-CODE" id="FB4E32DD">
    <property type="entry name" value="Presynaptic clusters and postsynaptic densities"/>
</dbReference>
<dbReference type="ChiTaRS" id="SLC25A4">
    <property type="organism name" value="human"/>
</dbReference>
<dbReference type="GeneWiki" id="SLC25A4"/>
<dbReference type="GenomeRNAi" id="291"/>
<dbReference type="Pharos" id="P12235">
    <property type="development level" value="Tbio"/>
</dbReference>
<dbReference type="PRO" id="PR:P12235"/>
<dbReference type="Proteomes" id="UP000005640">
    <property type="component" value="Chromosome 4"/>
</dbReference>
<dbReference type="RNAct" id="P12235">
    <property type="molecule type" value="protein"/>
</dbReference>
<dbReference type="Bgee" id="ENSG00000151729">
    <property type="expression patterns" value="Expressed in left ventricle myocardium and 209 other cell types or tissues"/>
</dbReference>
<dbReference type="ExpressionAtlas" id="P12235">
    <property type="expression patterns" value="baseline and differential"/>
</dbReference>
<dbReference type="GO" id="GO:0016020">
    <property type="term" value="C:membrane"/>
    <property type="evidence" value="ECO:0000314"/>
    <property type="project" value="UniProtKB"/>
</dbReference>
<dbReference type="GO" id="GO:0005743">
    <property type="term" value="C:mitochondrial inner membrane"/>
    <property type="evidence" value="ECO:0000314"/>
    <property type="project" value="UniProtKB"/>
</dbReference>
<dbReference type="GO" id="GO:0031966">
    <property type="term" value="C:mitochondrial membrane"/>
    <property type="evidence" value="ECO:0000250"/>
    <property type="project" value="UniProtKB"/>
</dbReference>
<dbReference type="GO" id="GO:0005757">
    <property type="term" value="C:mitochondrial permeability transition pore complex"/>
    <property type="evidence" value="ECO:0000250"/>
    <property type="project" value="UniProtKB"/>
</dbReference>
<dbReference type="GO" id="GO:0005739">
    <property type="term" value="C:mitochondrion"/>
    <property type="evidence" value="ECO:0000314"/>
    <property type="project" value="HPA"/>
</dbReference>
<dbReference type="GO" id="GO:0005886">
    <property type="term" value="C:plasma membrane"/>
    <property type="evidence" value="ECO:0000304"/>
    <property type="project" value="ProtInc"/>
</dbReference>
<dbReference type="GO" id="GO:0015207">
    <property type="term" value="F:adenine transmembrane transporter activity"/>
    <property type="evidence" value="ECO:0000304"/>
    <property type="project" value="ProtInc"/>
</dbReference>
<dbReference type="GO" id="GO:0005471">
    <property type="term" value="F:ATP:ADP antiporter activity"/>
    <property type="evidence" value="ECO:0000314"/>
    <property type="project" value="UniProtKB"/>
</dbReference>
<dbReference type="GO" id="GO:0017077">
    <property type="term" value="F:oxidative phosphorylation uncoupler activity"/>
    <property type="evidence" value="ECO:0000250"/>
    <property type="project" value="UniProtKB"/>
</dbReference>
<dbReference type="GO" id="GO:0015078">
    <property type="term" value="F:proton transmembrane transporter activity"/>
    <property type="evidence" value="ECO:0000304"/>
    <property type="project" value="Reactome"/>
</dbReference>
<dbReference type="GO" id="GO:1990845">
    <property type="term" value="P:adaptive thermogenesis"/>
    <property type="evidence" value="ECO:0000250"/>
    <property type="project" value="UniProtKB"/>
</dbReference>
<dbReference type="GO" id="GO:0015866">
    <property type="term" value="P:ADP transport"/>
    <property type="evidence" value="ECO:0000315"/>
    <property type="project" value="UniProtKB"/>
</dbReference>
<dbReference type="GO" id="GO:0008637">
    <property type="term" value="P:apoptotic mitochondrial changes"/>
    <property type="evidence" value="ECO:0007669"/>
    <property type="project" value="Ensembl"/>
</dbReference>
<dbReference type="GO" id="GO:0006091">
    <property type="term" value="P:generation of precursor metabolites and energy"/>
    <property type="evidence" value="ECO:0000304"/>
    <property type="project" value="ProtInc"/>
</dbReference>
<dbReference type="GO" id="GO:0140021">
    <property type="term" value="P:mitochondrial ADP transmembrane transport"/>
    <property type="evidence" value="ECO:0000314"/>
    <property type="project" value="UniProtKB"/>
</dbReference>
<dbReference type="GO" id="GO:1990544">
    <property type="term" value="P:mitochondrial ATP transmembrane transport"/>
    <property type="evidence" value="ECO:0000314"/>
    <property type="project" value="UniProtKB"/>
</dbReference>
<dbReference type="GO" id="GO:0000002">
    <property type="term" value="P:mitochondrial genome maintenance"/>
    <property type="evidence" value="ECO:0000304"/>
    <property type="project" value="ProtInc"/>
</dbReference>
<dbReference type="GO" id="GO:1901029">
    <property type="term" value="P:negative regulation of mitochondrial outer membrane permeabilization involved in apoptotic signaling pathway"/>
    <property type="evidence" value="ECO:0000318"/>
    <property type="project" value="GO_Central"/>
</dbReference>
<dbReference type="GO" id="GO:0060546">
    <property type="term" value="P:negative regulation of necroptotic process"/>
    <property type="evidence" value="ECO:0000315"/>
    <property type="project" value="BHF-UCL"/>
</dbReference>
<dbReference type="GO" id="GO:1901526">
    <property type="term" value="P:positive regulation of mitophagy"/>
    <property type="evidence" value="ECO:0000250"/>
    <property type="project" value="UniProtKB"/>
</dbReference>
<dbReference type="GO" id="GO:0046902">
    <property type="term" value="P:regulation of mitochondrial membrane permeability"/>
    <property type="evidence" value="ECO:0000250"/>
    <property type="project" value="UniProtKB"/>
</dbReference>
<dbReference type="FunFam" id="1.50.40.10:FF:000002">
    <property type="entry name" value="Putative ADP/ATP translocase 2-like"/>
    <property type="match status" value="1"/>
</dbReference>
<dbReference type="Gene3D" id="1.50.40.10">
    <property type="entry name" value="Mitochondrial carrier domain"/>
    <property type="match status" value="1"/>
</dbReference>
<dbReference type="InterPro" id="IPR002113">
    <property type="entry name" value="ADT_euk_type"/>
</dbReference>
<dbReference type="InterPro" id="IPR002067">
    <property type="entry name" value="Mit_carrier"/>
</dbReference>
<dbReference type="InterPro" id="IPR018108">
    <property type="entry name" value="Mitochondrial_sb/sol_carrier"/>
</dbReference>
<dbReference type="InterPro" id="IPR023395">
    <property type="entry name" value="Mt_carrier_dom_sf"/>
</dbReference>
<dbReference type="PANTHER" id="PTHR45635">
    <property type="entry name" value="ADP,ATP CARRIER PROTEIN 1-RELATED-RELATED"/>
    <property type="match status" value="1"/>
</dbReference>
<dbReference type="PANTHER" id="PTHR45635:SF32">
    <property type="entry name" value="ADP_ATP TRANSLOCASE 1"/>
    <property type="match status" value="1"/>
</dbReference>
<dbReference type="Pfam" id="PF00153">
    <property type="entry name" value="Mito_carr"/>
    <property type="match status" value="3"/>
</dbReference>
<dbReference type="PRINTS" id="PR00927">
    <property type="entry name" value="ADPTRNSLCASE"/>
</dbReference>
<dbReference type="PRINTS" id="PR00926">
    <property type="entry name" value="MITOCARRIER"/>
</dbReference>
<dbReference type="SUPFAM" id="SSF103506">
    <property type="entry name" value="Mitochondrial carrier"/>
    <property type="match status" value="1"/>
</dbReference>
<dbReference type="PROSITE" id="PS50920">
    <property type="entry name" value="SOLCAR"/>
    <property type="match status" value="3"/>
</dbReference>
<name>ADT1_HUMAN</name>
<gene>
    <name evidence="22 25" type="primary">SLC25A4</name>
    <name evidence="3" type="synonym">AAC1</name>
    <name evidence="23" type="synonym">ANT1</name>
</gene>
<organism>
    <name type="scientific">Homo sapiens</name>
    <name type="common">Human</name>
    <dbReference type="NCBI Taxonomy" id="9606"/>
    <lineage>
        <taxon>Eukaryota</taxon>
        <taxon>Metazoa</taxon>
        <taxon>Chordata</taxon>
        <taxon>Craniata</taxon>
        <taxon>Vertebrata</taxon>
        <taxon>Euteleostomi</taxon>
        <taxon>Mammalia</taxon>
        <taxon>Eutheria</taxon>
        <taxon>Euarchontoglires</taxon>
        <taxon>Primates</taxon>
        <taxon>Haplorrhini</taxon>
        <taxon>Catarrhini</taxon>
        <taxon>Hominidae</taxon>
        <taxon>Homo</taxon>
    </lineage>
</organism>